<sequence length="100" mass="11022">METCQMSRSPRERLLLLLLLLLLVPWGTGPASGVALPLAGVFSLRAPGRAWAGLGSPLSRRSLALADDAAFRERARLLAALERRRWLDSYMQKLLLLDAP</sequence>
<feature type="signal peptide" evidence="2">
    <location>
        <begin position="1"/>
        <end position="30"/>
    </location>
</feature>
<feature type="propeptide" id="PRO_0000227670" evidence="1">
    <location>
        <begin position="31"/>
        <end position="59"/>
    </location>
</feature>
<feature type="peptide" id="PRO_0000227671" description="Tuberoinfundibular peptide of 39 residues">
    <location>
        <begin position="62"/>
        <end position="100"/>
    </location>
</feature>
<reference key="1">
    <citation type="journal article" date="2002" name="Proc. Natl. Acad. Sci. U.S.A.">
        <title>Anatomical and physiological evidence for involvement of tuberoinfundibular peptide of 39 residues in nociception.</title>
        <authorList>
            <person name="Dobolyi A."/>
            <person name="Ueda H."/>
            <person name="Uchida H."/>
            <person name="Palkovits M."/>
            <person name="Usdin T.B."/>
        </authorList>
    </citation>
    <scope>NUCLEOTIDE SEQUENCE [MRNA]</scope>
    <scope>TISSUE SPECIFICITY</scope>
</reference>
<reference key="2">
    <citation type="journal article" date="2003" name="Neuropharmacology">
        <title>Tuberoinfundibular peptide of 39 residues (TIP39): molecular structure and activity for parathyroid hormone 2 receptor.</title>
        <authorList>
            <person name="Della Penna K."/>
            <person name="Kinose F."/>
            <person name="Sun H."/>
            <person name="Koblan K.S."/>
            <person name="Wang H."/>
        </authorList>
    </citation>
    <scope>NUCLEOTIDE SEQUENCE [MRNA]</scope>
    <scope>FUNCTION</scope>
</reference>
<reference key="3">
    <citation type="journal article" date="2003" name="J. Comp. Neurol.">
        <title>Expression and distribution of tuberoinfundibular peptide of 39 residues in the rat central nervous system.</title>
        <authorList>
            <person name="Dobolyi A."/>
            <person name="Palkovits M."/>
            <person name="Usdin T.B."/>
        </authorList>
    </citation>
    <scope>TISSUE SPECIFICITY</scope>
</reference>
<keyword id="KW-0165">Cleavage on pair of basic residues</keyword>
<keyword id="KW-0527">Neuropeptide</keyword>
<keyword id="KW-1185">Reference proteome</keyword>
<keyword id="KW-0964">Secreted</keyword>
<keyword id="KW-0732">Signal</keyword>
<name>TIP39_RAT</name>
<dbReference type="SMR" id="P0C172"/>
<dbReference type="FunCoup" id="P0C172">
    <property type="interactions" value="46"/>
</dbReference>
<dbReference type="STRING" id="10116.ENSRNOP00000028072"/>
<dbReference type="PhosphoSitePlus" id="P0C172"/>
<dbReference type="PaxDb" id="10116-ENSRNOP00000028072"/>
<dbReference type="UCSC" id="RGD:1559447">
    <property type="organism name" value="rat"/>
</dbReference>
<dbReference type="AGR" id="RGD:1559447"/>
<dbReference type="RGD" id="1559447">
    <property type="gene designation" value="Pth2"/>
</dbReference>
<dbReference type="eggNOG" id="ENOG502S3PJ">
    <property type="taxonomic scope" value="Eukaryota"/>
</dbReference>
<dbReference type="InParanoid" id="P0C172"/>
<dbReference type="PhylomeDB" id="P0C172"/>
<dbReference type="Reactome" id="R-RNO-373080">
    <property type="pathway name" value="Class B/2 (Secretin family receptors)"/>
</dbReference>
<dbReference type="PRO" id="PR:P0C172"/>
<dbReference type="Proteomes" id="UP000002494">
    <property type="component" value="Unplaced"/>
</dbReference>
<dbReference type="GO" id="GO:0005576">
    <property type="term" value="C:extracellular region"/>
    <property type="evidence" value="ECO:0007669"/>
    <property type="project" value="UniProtKB-SubCell"/>
</dbReference>
<dbReference type="GO" id="GO:0007218">
    <property type="term" value="P:neuropeptide signaling pathway"/>
    <property type="evidence" value="ECO:0007669"/>
    <property type="project" value="UniProtKB-KW"/>
</dbReference>
<dbReference type="InterPro" id="IPR029396">
    <property type="entry name" value="TIP39"/>
</dbReference>
<dbReference type="PANTHER" id="PTHR28585">
    <property type="entry name" value="TUBEROINFUNDIBULAR PEPTIDE OF 39 RESIDUES"/>
    <property type="match status" value="1"/>
</dbReference>
<dbReference type="PANTHER" id="PTHR28585:SF1">
    <property type="entry name" value="TUBEROINFUNDIBULAR PEPTIDE OF 39 RESIDUES"/>
    <property type="match status" value="1"/>
</dbReference>
<dbReference type="Pfam" id="PF14980">
    <property type="entry name" value="TIP39"/>
    <property type="match status" value="1"/>
</dbReference>
<gene>
    <name type="primary">Pth2</name>
    <name type="synonym">Tip39</name>
    <name type="synonym">Tipf39</name>
</gene>
<protein>
    <recommendedName>
        <fullName>Tuberoinfundibular peptide of 39 residues</fullName>
        <shortName>TIP39</shortName>
    </recommendedName>
    <alternativeName>
        <fullName>Parathyroid hormone 2</fullName>
    </alternativeName>
</protein>
<proteinExistence type="evidence at transcript level"/>
<evidence type="ECO:0000250" key="1"/>
<evidence type="ECO:0000255" key="2"/>
<evidence type="ECO:0000269" key="3">
    <source>
    </source>
</evidence>
<evidence type="ECO:0000269" key="4">
    <source>
    </source>
</evidence>
<evidence type="ECO:0000269" key="5">
    <source>
    </source>
</evidence>
<evidence type="ECO:0000305" key="6"/>
<organism>
    <name type="scientific">Rattus norvegicus</name>
    <name type="common">Rat</name>
    <dbReference type="NCBI Taxonomy" id="10116"/>
    <lineage>
        <taxon>Eukaryota</taxon>
        <taxon>Metazoa</taxon>
        <taxon>Chordata</taxon>
        <taxon>Craniata</taxon>
        <taxon>Vertebrata</taxon>
        <taxon>Euteleostomi</taxon>
        <taxon>Mammalia</taxon>
        <taxon>Eutheria</taxon>
        <taxon>Euarchontoglires</taxon>
        <taxon>Glires</taxon>
        <taxon>Rodentia</taxon>
        <taxon>Myomorpha</taxon>
        <taxon>Muroidea</taxon>
        <taxon>Muridae</taxon>
        <taxon>Murinae</taxon>
        <taxon>Rattus</taxon>
    </lineage>
</organism>
<accession>P0C172</accession>
<comment type="function">
    <text evidence="5">Plays a role as a potent and selective agonist of PTH2R resulting in adenyl cyclase activation and intracellular calcium levels elevation. Induces protein kinase C beta activation, recruitment of beta-arrestin and PTH2R internalization. May inhibit cell proliferation via its action of PTH2R activation. Neuropeptide which may also have a role in spermatogenesis. May activate nociceptors and nociceptive circuits.</text>
</comment>
<comment type="subunit">
    <text>Ligand of high affinity for the PTH2 receptor (PTH2R).</text>
</comment>
<comment type="subcellular location">
    <subcellularLocation>
        <location>Secreted</location>
    </subcellularLocation>
</comment>
<comment type="tissue specificity">
    <text evidence="3 4">Expressed in brain, dorsal root ganglion, eye and testis. In brain expressed in cell bodies of three distinct areas: The major one comprises the subparafascicular area posterior through the intralaminar nucleus of the thalamus; a second is the medial paralemniscal nucleus at the pontomesencephalic junction; and a third is in the dorsal and dorsolateral hypothalamic areas, which contained a few, scattered cell bodies. In brain expressed in fibers of limbic areas such as the septum, the amygdala, and the bed nucleus of the stria terminalis; of areas involved in endocrine regulation, such as the hypothalamic dorsomedial, paraventricular, periventricular, and arcuate nuclei; of auditory areas, such as the ectorhinal and temporal cortices, inferior colliculus, medial geniculate body, and some of the nuclei of the superior olivary complex; and in the dorsolateral funiculus of the spinal cord.</text>
</comment>
<comment type="similarity">
    <text evidence="6">Belongs to the parathyroid hormone family.</text>
</comment>